<accession>A6U046</accession>
<organism>
    <name type="scientific">Staphylococcus aureus (strain JH1)</name>
    <dbReference type="NCBI Taxonomy" id="359787"/>
    <lineage>
        <taxon>Bacteria</taxon>
        <taxon>Bacillati</taxon>
        <taxon>Bacillota</taxon>
        <taxon>Bacilli</taxon>
        <taxon>Bacillales</taxon>
        <taxon>Staphylococcaceae</taxon>
        <taxon>Staphylococcus</taxon>
    </lineage>
</organism>
<name>Y958_STAA2</name>
<feature type="chain" id="PRO_1000087646" description="UPF0349 protein SaurJH1_0958">
    <location>
        <begin position="1"/>
        <end position="78"/>
    </location>
</feature>
<protein>
    <recommendedName>
        <fullName evidence="1">UPF0349 protein SaurJH1_0958</fullName>
    </recommendedName>
</protein>
<sequence length="78" mass="8657">MNPIVEFCLSNMAKGGDYVFNQLENDPDVDVLEYGCLTHCGICSAGLYALVNGDIVEGDSPEELLQNIYAHIKETWIF</sequence>
<dbReference type="EMBL" id="CP000736">
    <property type="protein sequence ID" value="ABR51814.1"/>
    <property type="molecule type" value="Genomic_DNA"/>
</dbReference>
<dbReference type="SMR" id="A6U046"/>
<dbReference type="KEGG" id="sah:SaurJH1_0958"/>
<dbReference type="HOGENOM" id="CLU_182025_0_0_9"/>
<dbReference type="HAMAP" id="MF_01542">
    <property type="entry name" value="UPF0349"/>
    <property type="match status" value="1"/>
</dbReference>
<dbReference type="InterPro" id="IPR009910">
    <property type="entry name" value="DUF1450"/>
</dbReference>
<dbReference type="InterPro" id="IPR022916">
    <property type="entry name" value="UPF0349"/>
</dbReference>
<dbReference type="NCBIfam" id="NF010190">
    <property type="entry name" value="PRK13669.1"/>
    <property type="match status" value="1"/>
</dbReference>
<dbReference type="Pfam" id="PF07293">
    <property type="entry name" value="DUF1450"/>
    <property type="match status" value="1"/>
</dbReference>
<comment type="similarity">
    <text evidence="1">Belongs to the UPF0349 family.</text>
</comment>
<reference key="1">
    <citation type="submission" date="2007-06" db="EMBL/GenBank/DDBJ databases">
        <title>Complete sequence of chromosome of Staphylococcus aureus subsp. aureus JH1.</title>
        <authorList>
            <consortium name="US DOE Joint Genome Institute"/>
            <person name="Copeland A."/>
            <person name="Lucas S."/>
            <person name="Lapidus A."/>
            <person name="Barry K."/>
            <person name="Detter J.C."/>
            <person name="Glavina del Rio T."/>
            <person name="Hammon N."/>
            <person name="Israni S."/>
            <person name="Dalin E."/>
            <person name="Tice H."/>
            <person name="Pitluck S."/>
            <person name="Chain P."/>
            <person name="Malfatti S."/>
            <person name="Shin M."/>
            <person name="Vergez L."/>
            <person name="Schmutz J."/>
            <person name="Larimer F."/>
            <person name="Land M."/>
            <person name="Hauser L."/>
            <person name="Kyrpides N."/>
            <person name="Ivanova N."/>
            <person name="Tomasz A."/>
            <person name="Richardson P."/>
        </authorList>
    </citation>
    <scope>NUCLEOTIDE SEQUENCE [LARGE SCALE GENOMIC DNA]</scope>
    <source>
        <strain>JH1</strain>
    </source>
</reference>
<gene>
    <name type="ordered locus">SaurJH1_0958</name>
</gene>
<evidence type="ECO:0000255" key="1">
    <source>
        <dbReference type="HAMAP-Rule" id="MF_01542"/>
    </source>
</evidence>
<proteinExistence type="inferred from homology"/>